<evidence type="ECO:0000255" key="1">
    <source>
        <dbReference type="HAMAP-Rule" id="MF_01633"/>
    </source>
</evidence>
<proteinExistence type="inferred from homology"/>
<organism>
    <name type="scientific">Rhodopirellula baltica (strain DSM 10527 / NCIMB 13988 / SH1)</name>
    <dbReference type="NCBI Taxonomy" id="243090"/>
    <lineage>
        <taxon>Bacteria</taxon>
        <taxon>Pseudomonadati</taxon>
        <taxon>Planctomycetota</taxon>
        <taxon>Planctomycetia</taxon>
        <taxon>Pirellulales</taxon>
        <taxon>Pirellulaceae</taxon>
        <taxon>Rhodopirellula</taxon>
    </lineage>
</organism>
<sequence>MERRLVNSTSQSKTESAQQDAGKAVVLLSGGLDSATCVAIARDQGFEVHAISFRYGQRHDGELDRAAKQASLMGVVSHRVIDIDLAQLGGSALVDSSIAVPKSDHVDKIAGDIPVTYVPARNTIFLSYALAVAETLGSRDIFIGVNALDYSGYPDCRPEFIDAFQTMARLATKAGVEDEHSLTIHTPLLHWTKAEIIQRGIELGVDYSQTLSCYDPQGSSDEMRPCGQCDACLLRAKGFAENEIADPAIG</sequence>
<name>QUEC_RHOBA</name>
<feature type="chain" id="PRO_0000246905" description="7-cyano-7-deazaguanine synthase">
    <location>
        <begin position="1"/>
        <end position="250"/>
    </location>
</feature>
<feature type="binding site" evidence="1">
    <location>
        <begin position="28"/>
        <end position="38"/>
    </location>
    <ligand>
        <name>ATP</name>
        <dbReference type="ChEBI" id="CHEBI:30616"/>
    </ligand>
</feature>
<feature type="binding site" evidence="1">
    <location>
        <position position="213"/>
    </location>
    <ligand>
        <name>Zn(2+)</name>
        <dbReference type="ChEBI" id="CHEBI:29105"/>
    </ligand>
</feature>
<feature type="binding site" evidence="1">
    <location>
        <position position="226"/>
    </location>
    <ligand>
        <name>Zn(2+)</name>
        <dbReference type="ChEBI" id="CHEBI:29105"/>
    </ligand>
</feature>
<feature type="binding site" evidence="1">
    <location>
        <position position="229"/>
    </location>
    <ligand>
        <name>Zn(2+)</name>
        <dbReference type="ChEBI" id="CHEBI:29105"/>
    </ligand>
</feature>
<feature type="binding site" evidence="1">
    <location>
        <position position="232"/>
    </location>
    <ligand>
        <name>Zn(2+)</name>
        <dbReference type="ChEBI" id="CHEBI:29105"/>
    </ligand>
</feature>
<keyword id="KW-0067">ATP-binding</keyword>
<keyword id="KW-0436">Ligase</keyword>
<keyword id="KW-0479">Metal-binding</keyword>
<keyword id="KW-0547">Nucleotide-binding</keyword>
<keyword id="KW-0671">Queuosine biosynthesis</keyword>
<keyword id="KW-1185">Reference proteome</keyword>
<keyword id="KW-0862">Zinc</keyword>
<comment type="function">
    <text evidence="1">Catalyzes the ATP-dependent conversion of 7-carboxy-7-deazaguanine (CDG) to 7-cyano-7-deazaguanine (preQ(0)).</text>
</comment>
<comment type="catalytic activity">
    <reaction evidence="1">
        <text>7-carboxy-7-deazaguanine + NH4(+) + ATP = 7-cyano-7-deazaguanine + ADP + phosphate + H2O + H(+)</text>
        <dbReference type="Rhea" id="RHEA:27982"/>
        <dbReference type="ChEBI" id="CHEBI:15377"/>
        <dbReference type="ChEBI" id="CHEBI:15378"/>
        <dbReference type="ChEBI" id="CHEBI:28938"/>
        <dbReference type="ChEBI" id="CHEBI:30616"/>
        <dbReference type="ChEBI" id="CHEBI:43474"/>
        <dbReference type="ChEBI" id="CHEBI:45075"/>
        <dbReference type="ChEBI" id="CHEBI:61036"/>
        <dbReference type="ChEBI" id="CHEBI:456216"/>
        <dbReference type="EC" id="6.3.4.20"/>
    </reaction>
</comment>
<comment type="cofactor">
    <cofactor evidence="1">
        <name>Zn(2+)</name>
        <dbReference type="ChEBI" id="CHEBI:29105"/>
    </cofactor>
    <text evidence="1">Binds 1 zinc ion per subunit.</text>
</comment>
<comment type="pathway">
    <text evidence="1">Purine metabolism; 7-cyano-7-deazaguanine biosynthesis.</text>
</comment>
<comment type="similarity">
    <text evidence="1">Belongs to the QueC family.</text>
</comment>
<accession>Q7UFU6</accession>
<reference key="1">
    <citation type="journal article" date="2003" name="Proc. Natl. Acad. Sci. U.S.A.">
        <title>Complete genome sequence of the marine planctomycete Pirellula sp. strain 1.</title>
        <authorList>
            <person name="Gloeckner F.O."/>
            <person name="Kube M."/>
            <person name="Bauer M."/>
            <person name="Teeling H."/>
            <person name="Lombardot T."/>
            <person name="Ludwig W."/>
            <person name="Gade D."/>
            <person name="Beck A."/>
            <person name="Borzym K."/>
            <person name="Heitmann K."/>
            <person name="Rabus R."/>
            <person name="Schlesner H."/>
            <person name="Amann R."/>
            <person name="Reinhardt R."/>
        </authorList>
    </citation>
    <scope>NUCLEOTIDE SEQUENCE [LARGE SCALE GENOMIC DNA]</scope>
    <source>
        <strain>DSM 10527 / NCIMB 13988 / SH1</strain>
    </source>
</reference>
<protein>
    <recommendedName>
        <fullName evidence="1">7-cyano-7-deazaguanine synthase</fullName>
        <ecNumber evidence="1">6.3.4.20</ecNumber>
    </recommendedName>
    <alternativeName>
        <fullName evidence="1">7-cyano-7-carbaguanine synthase</fullName>
    </alternativeName>
    <alternativeName>
        <fullName evidence="1">PreQ(0) synthase</fullName>
    </alternativeName>
    <alternativeName>
        <fullName evidence="1">Queuosine biosynthesis protein QueC</fullName>
    </alternativeName>
</protein>
<dbReference type="EC" id="6.3.4.20" evidence="1"/>
<dbReference type="EMBL" id="BX294147">
    <property type="protein sequence ID" value="CAD78584.1"/>
    <property type="molecule type" value="Genomic_DNA"/>
</dbReference>
<dbReference type="RefSeq" id="NP_868306.1">
    <property type="nucleotide sequence ID" value="NC_005027.1"/>
</dbReference>
<dbReference type="SMR" id="Q7UFU6"/>
<dbReference type="FunCoup" id="Q7UFU6">
    <property type="interactions" value="140"/>
</dbReference>
<dbReference type="STRING" id="243090.RB8329"/>
<dbReference type="EnsemblBacteria" id="CAD78584">
    <property type="protein sequence ID" value="CAD78584"/>
    <property type="gene ID" value="RB8329"/>
</dbReference>
<dbReference type="KEGG" id="rba:RB8329"/>
<dbReference type="PATRIC" id="fig|243090.15.peg.4015"/>
<dbReference type="eggNOG" id="COG0603">
    <property type="taxonomic scope" value="Bacteria"/>
</dbReference>
<dbReference type="HOGENOM" id="CLU_081854_1_1_0"/>
<dbReference type="InParanoid" id="Q7UFU6"/>
<dbReference type="OrthoDB" id="9789567at2"/>
<dbReference type="UniPathway" id="UPA00391"/>
<dbReference type="Proteomes" id="UP000001025">
    <property type="component" value="Chromosome"/>
</dbReference>
<dbReference type="GO" id="GO:0005524">
    <property type="term" value="F:ATP binding"/>
    <property type="evidence" value="ECO:0007669"/>
    <property type="project" value="UniProtKB-UniRule"/>
</dbReference>
<dbReference type="GO" id="GO:0016879">
    <property type="term" value="F:ligase activity, forming carbon-nitrogen bonds"/>
    <property type="evidence" value="ECO:0007669"/>
    <property type="project" value="UniProtKB-UniRule"/>
</dbReference>
<dbReference type="GO" id="GO:0008270">
    <property type="term" value="F:zinc ion binding"/>
    <property type="evidence" value="ECO:0007669"/>
    <property type="project" value="UniProtKB-UniRule"/>
</dbReference>
<dbReference type="GO" id="GO:0008616">
    <property type="term" value="P:queuosine biosynthetic process"/>
    <property type="evidence" value="ECO:0007669"/>
    <property type="project" value="UniProtKB-UniRule"/>
</dbReference>
<dbReference type="CDD" id="cd01995">
    <property type="entry name" value="QueC-like"/>
    <property type="match status" value="1"/>
</dbReference>
<dbReference type="FunFam" id="3.40.50.620:FF:000131">
    <property type="entry name" value="7-cyano-7-deazaguanine synthase"/>
    <property type="match status" value="1"/>
</dbReference>
<dbReference type="Gene3D" id="3.40.50.620">
    <property type="entry name" value="HUPs"/>
    <property type="match status" value="1"/>
</dbReference>
<dbReference type="HAMAP" id="MF_01633">
    <property type="entry name" value="QueC"/>
    <property type="match status" value="1"/>
</dbReference>
<dbReference type="InterPro" id="IPR018317">
    <property type="entry name" value="QueC"/>
</dbReference>
<dbReference type="InterPro" id="IPR014729">
    <property type="entry name" value="Rossmann-like_a/b/a_fold"/>
</dbReference>
<dbReference type="NCBIfam" id="TIGR00364">
    <property type="entry name" value="7-cyano-7-deazaguanine synthase QueC"/>
    <property type="match status" value="1"/>
</dbReference>
<dbReference type="PANTHER" id="PTHR42914">
    <property type="entry name" value="7-CYANO-7-DEAZAGUANINE SYNTHASE"/>
    <property type="match status" value="1"/>
</dbReference>
<dbReference type="PANTHER" id="PTHR42914:SF1">
    <property type="entry name" value="7-CYANO-7-DEAZAGUANINE SYNTHASE"/>
    <property type="match status" value="1"/>
</dbReference>
<dbReference type="Pfam" id="PF06508">
    <property type="entry name" value="QueC"/>
    <property type="match status" value="1"/>
</dbReference>
<dbReference type="PIRSF" id="PIRSF006293">
    <property type="entry name" value="ExsB"/>
    <property type="match status" value="1"/>
</dbReference>
<dbReference type="SUPFAM" id="SSF52402">
    <property type="entry name" value="Adenine nucleotide alpha hydrolases-like"/>
    <property type="match status" value="1"/>
</dbReference>
<gene>
    <name evidence="1" type="primary">queC</name>
    <name type="ordered locus">RB8329</name>
</gene>